<dbReference type="EC" id="4.3.3.7" evidence="1"/>
<dbReference type="EMBL" id="CP000698">
    <property type="protein sequence ID" value="ABQ24450.1"/>
    <property type="molecule type" value="Genomic_DNA"/>
</dbReference>
<dbReference type="RefSeq" id="WP_011937179.1">
    <property type="nucleotide sequence ID" value="NC_009483.1"/>
</dbReference>
<dbReference type="SMR" id="A5GD89"/>
<dbReference type="STRING" id="351605.Gura_0234"/>
<dbReference type="KEGG" id="gur:Gura_0234"/>
<dbReference type="HOGENOM" id="CLU_049343_7_0_7"/>
<dbReference type="OrthoDB" id="9782828at2"/>
<dbReference type="UniPathway" id="UPA00034">
    <property type="reaction ID" value="UER00017"/>
</dbReference>
<dbReference type="Proteomes" id="UP000006695">
    <property type="component" value="Chromosome"/>
</dbReference>
<dbReference type="GO" id="GO:0005829">
    <property type="term" value="C:cytosol"/>
    <property type="evidence" value="ECO:0007669"/>
    <property type="project" value="TreeGrafter"/>
</dbReference>
<dbReference type="GO" id="GO:0008840">
    <property type="term" value="F:4-hydroxy-tetrahydrodipicolinate synthase activity"/>
    <property type="evidence" value="ECO:0007669"/>
    <property type="project" value="UniProtKB-UniRule"/>
</dbReference>
<dbReference type="GO" id="GO:0019877">
    <property type="term" value="P:diaminopimelate biosynthetic process"/>
    <property type="evidence" value="ECO:0007669"/>
    <property type="project" value="UniProtKB-UniRule"/>
</dbReference>
<dbReference type="GO" id="GO:0009089">
    <property type="term" value="P:lysine biosynthetic process via diaminopimelate"/>
    <property type="evidence" value="ECO:0007669"/>
    <property type="project" value="UniProtKB-UniRule"/>
</dbReference>
<dbReference type="CDD" id="cd00950">
    <property type="entry name" value="DHDPS"/>
    <property type="match status" value="1"/>
</dbReference>
<dbReference type="Gene3D" id="3.20.20.70">
    <property type="entry name" value="Aldolase class I"/>
    <property type="match status" value="1"/>
</dbReference>
<dbReference type="HAMAP" id="MF_00418">
    <property type="entry name" value="DapA"/>
    <property type="match status" value="1"/>
</dbReference>
<dbReference type="InterPro" id="IPR013785">
    <property type="entry name" value="Aldolase_TIM"/>
</dbReference>
<dbReference type="InterPro" id="IPR005263">
    <property type="entry name" value="DapA"/>
</dbReference>
<dbReference type="InterPro" id="IPR002220">
    <property type="entry name" value="DapA-like"/>
</dbReference>
<dbReference type="InterPro" id="IPR020625">
    <property type="entry name" value="Schiff_base-form_aldolases_AS"/>
</dbReference>
<dbReference type="InterPro" id="IPR020624">
    <property type="entry name" value="Schiff_base-form_aldolases_CS"/>
</dbReference>
<dbReference type="NCBIfam" id="TIGR00674">
    <property type="entry name" value="dapA"/>
    <property type="match status" value="1"/>
</dbReference>
<dbReference type="PANTHER" id="PTHR12128:SF66">
    <property type="entry name" value="4-HYDROXY-2-OXOGLUTARATE ALDOLASE, MITOCHONDRIAL"/>
    <property type="match status" value="1"/>
</dbReference>
<dbReference type="PANTHER" id="PTHR12128">
    <property type="entry name" value="DIHYDRODIPICOLINATE SYNTHASE"/>
    <property type="match status" value="1"/>
</dbReference>
<dbReference type="Pfam" id="PF00701">
    <property type="entry name" value="DHDPS"/>
    <property type="match status" value="1"/>
</dbReference>
<dbReference type="PIRSF" id="PIRSF001365">
    <property type="entry name" value="DHDPS"/>
    <property type="match status" value="1"/>
</dbReference>
<dbReference type="PRINTS" id="PR00146">
    <property type="entry name" value="DHPICSNTHASE"/>
</dbReference>
<dbReference type="SMART" id="SM01130">
    <property type="entry name" value="DHDPS"/>
    <property type="match status" value="1"/>
</dbReference>
<dbReference type="SUPFAM" id="SSF51569">
    <property type="entry name" value="Aldolase"/>
    <property type="match status" value="1"/>
</dbReference>
<dbReference type="PROSITE" id="PS00665">
    <property type="entry name" value="DHDPS_1"/>
    <property type="match status" value="1"/>
</dbReference>
<dbReference type="PROSITE" id="PS00666">
    <property type="entry name" value="DHDPS_2"/>
    <property type="match status" value="1"/>
</dbReference>
<reference key="1">
    <citation type="submission" date="2007-05" db="EMBL/GenBank/DDBJ databases">
        <title>Complete sequence of Geobacter uraniireducens Rf4.</title>
        <authorList>
            <consortium name="US DOE Joint Genome Institute"/>
            <person name="Copeland A."/>
            <person name="Lucas S."/>
            <person name="Lapidus A."/>
            <person name="Barry K."/>
            <person name="Detter J.C."/>
            <person name="Glavina del Rio T."/>
            <person name="Hammon N."/>
            <person name="Israni S."/>
            <person name="Dalin E."/>
            <person name="Tice H."/>
            <person name="Pitluck S."/>
            <person name="Chertkov O."/>
            <person name="Brettin T."/>
            <person name="Bruce D."/>
            <person name="Han C."/>
            <person name="Schmutz J."/>
            <person name="Larimer F."/>
            <person name="Land M."/>
            <person name="Hauser L."/>
            <person name="Kyrpides N."/>
            <person name="Mikhailova N."/>
            <person name="Shelobolina E."/>
            <person name="Aklujkar M."/>
            <person name="Lovley D."/>
            <person name="Richardson P."/>
        </authorList>
    </citation>
    <scope>NUCLEOTIDE SEQUENCE [LARGE SCALE GENOMIC DNA]</scope>
    <source>
        <strain>ATCC BAA-1134 / JCM 13001 / Rf4</strain>
    </source>
</reference>
<organism>
    <name type="scientific">Geotalea uraniireducens (strain Rf4)</name>
    <name type="common">Geobacter uraniireducens</name>
    <dbReference type="NCBI Taxonomy" id="351605"/>
    <lineage>
        <taxon>Bacteria</taxon>
        <taxon>Pseudomonadati</taxon>
        <taxon>Thermodesulfobacteriota</taxon>
        <taxon>Desulfuromonadia</taxon>
        <taxon>Geobacterales</taxon>
        <taxon>Geobacteraceae</taxon>
        <taxon>Geotalea</taxon>
    </lineage>
</organism>
<evidence type="ECO:0000255" key="1">
    <source>
        <dbReference type="HAMAP-Rule" id="MF_00418"/>
    </source>
</evidence>
<evidence type="ECO:0000305" key="2"/>
<proteinExistence type="inferred from homology"/>
<feature type="chain" id="PRO_1000080531" description="4-hydroxy-tetrahydrodipicolinate synthase">
    <location>
        <begin position="1"/>
        <end position="290"/>
    </location>
</feature>
<feature type="active site" description="Proton donor/acceptor" evidence="1">
    <location>
        <position position="132"/>
    </location>
</feature>
<feature type="active site" description="Schiff-base intermediate with substrate" evidence="1">
    <location>
        <position position="160"/>
    </location>
</feature>
<feature type="binding site" evidence="1">
    <location>
        <position position="44"/>
    </location>
    <ligand>
        <name>pyruvate</name>
        <dbReference type="ChEBI" id="CHEBI:15361"/>
    </ligand>
</feature>
<feature type="binding site" evidence="1">
    <location>
        <position position="202"/>
    </location>
    <ligand>
        <name>pyruvate</name>
        <dbReference type="ChEBI" id="CHEBI:15361"/>
    </ligand>
</feature>
<feature type="site" description="Part of a proton relay during catalysis" evidence="1">
    <location>
        <position position="43"/>
    </location>
</feature>
<feature type="site" description="Part of a proton relay during catalysis" evidence="1">
    <location>
        <position position="106"/>
    </location>
</feature>
<sequence length="290" mass="31256">MFKGSIVAIVTPFKNGAVDEEKLRELVEFQIENGTDAIVPCGTTGESSTLDYEEHDRVIEIVVEQVKKRVPVIAGTGSNSTKEAIEMTSHAKTLGADGALLVTPYYNKPTQEGLFLHYKAVADAVALPQILYNVPGRTGVNLLPETVARLAEHKNIVAIKEATGSLQQASEIIDLCGDKIDVFSGDDFITFPMMACGAKGVISVTANIMPKEVAALVDAFFAGKMEEARQWHLKLLKISNAMFIESNPVPVKTAVALMGKCSAEVRLPLAPLAEANKVKLVAIMKEYGLI</sequence>
<protein>
    <recommendedName>
        <fullName evidence="1">4-hydroxy-tetrahydrodipicolinate synthase</fullName>
        <shortName evidence="1">HTPA synthase</shortName>
        <ecNumber evidence="1">4.3.3.7</ecNumber>
    </recommendedName>
</protein>
<name>DAPA_GEOUR</name>
<keyword id="KW-0028">Amino-acid biosynthesis</keyword>
<keyword id="KW-0963">Cytoplasm</keyword>
<keyword id="KW-0220">Diaminopimelate biosynthesis</keyword>
<keyword id="KW-0456">Lyase</keyword>
<keyword id="KW-0457">Lysine biosynthesis</keyword>
<keyword id="KW-1185">Reference proteome</keyword>
<keyword id="KW-0704">Schiff base</keyword>
<gene>
    <name evidence="1" type="primary">dapA</name>
    <name type="ordered locus">Gura_0234</name>
</gene>
<accession>A5GD89</accession>
<comment type="function">
    <text evidence="1">Catalyzes the condensation of (S)-aspartate-beta-semialdehyde [(S)-ASA] and pyruvate to 4-hydroxy-tetrahydrodipicolinate (HTPA).</text>
</comment>
<comment type="catalytic activity">
    <reaction evidence="1">
        <text>L-aspartate 4-semialdehyde + pyruvate = (2S,4S)-4-hydroxy-2,3,4,5-tetrahydrodipicolinate + H2O + H(+)</text>
        <dbReference type="Rhea" id="RHEA:34171"/>
        <dbReference type="ChEBI" id="CHEBI:15361"/>
        <dbReference type="ChEBI" id="CHEBI:15377"/>
        <dbReference type="ChEBI" id="CHEBI:15378"/>
        <dbReference type="ChEBI" id="CHEBI:67139"/>
        <dbReference type="ChEBI" id="CHEBI:537519"/>
        <dbReference type="EC" id="4.3.3.7"/>
    </reaction>
</comment>
<comment type="pathway">
    <text evidence="1">Amino-acid biosynthesis; L-lysine biosynthesis via DAP pathway; (S)-tetrahydrodipicolinate from L-aspartate: step 3/4.</text>
</comment>
<comment type="subunit">
    <text evidence="1">Homotetramer; dimer of dimers.</text>
</comment>
<comment type="subcellular location">
    <subcellularLocation>
        <location evidence="1">Cytoplasm</location>
    </subcellularLocation>
</comment>
<comment type="similarity">
    <text evidence="1">Belongs to the DapA family.</text>
</comment>
<comment type="caution">
    <text evidence="2">Was originally thought to be a dihydrodipicolinate synthase (DHDPS), catalyzing the condensation of (S)-aspartate-beta-semialdehyde [(S)-ASA] and pyruvate to dihydrodipicolinate (DHDP). However, it was shown in E.coli that the product of the enzymatic reaction is not dihydrodipicolinate but in fact (4S)-4-hydroxy-2,3,4,5-tetrahydro-(2S)-dipicolinic acid (HTPA), and that the consecutive dehydration reaction leading to DHDP is not spontaneous but catalyzed by DapB.</text>
</comment>